<name>CCNB2_BOVIN</name>
<accession>O77689</accession>
<accession>Q17QG1</accession>
<accession>Q5BIS1</accession>
<accession>Q5E9U8</accession>
<accession>Q5EAA0</accession>
<dbReference type="EMBL" id="AF080219">
    <property type="protein sequence ID" value="AAC31953.1"/>
    <property type="molecule type" value="mRNA"/>
</dbReference>
<dbReference type="EMBL" id="BT020648">
    <property type="protein sequence ID" value="AAX08665.1"/>
    <property type="molecule type" value="mRNA"/>
</dbReference>
<dbReference type="EMBL" id="BT020669">
    <property type="protein sequence ID" value="AAX08686.1"/>
    <property type="molecule type" value="mRNA"/>
</dbReference>
<dbReference type="EMBL" id="BT020762">
    <property type="protein sequence ID" value="AAX08779.1"/>
    <property type="molecule type" value="mRNA"/>
</dbReference>
<dbReference type="EMBL" id="BT020822">
    <property type="protein sequence ID" value="AAX08839.1"/>
    <property type="molecule type" value="mRNA"/>
</dbReference>
<dbReference type="EMBL" id="BT021153">
    <property type="protein sequence ID" value="AAX31335.1"/>
    <property type="molecule type" value="mRNA"/>
</dbReference>
<dbReference type="EMBL" id="BC118382">
    <property type="protein sequence ID" value="AAI18383.1"/>
    <property type="molecule type" value="mRNA"/>
</dbReference>
<dbReference type="RefSeq" id="NP_776689.2">
    <property type="nucleotide sequence ID" value="NM_174264.3"/>
</dbReference>
<dbReference type="SMR" id="O77689"/>
<dbReference type="FunCoup" id="O77689">
    <property type="interactions" value="807"/>
</dbReference>
<dbReference type="STRING" id="9913.ENSBTAP00000006943"/>
<dbReference type="PaxDb" id="9913-ENSBTAP00000006943"/>
<dbReference type="GeneID" id="281668"/>
<dbReference type="KEGG" id="bta:281668"/>
<dbReference type="CTD" id="9133"/>
<dbReference type="eggNOG" id="KOG0653">
    <property type="taxonomic scope" value="Eukaryota"/>
</dbReference>
<dbReference type="HOGENOM" id="CLU_020695_2_1_1"/>
<dbReference type="InParanoid" id="O77689"/>
<dbReference type="OrthoDB" id="5590282at2759"/>
<dbReference type="TreeFam" id="TF101001"/>
<dbReference type="Proteomes" id="UP000009136">
    <property type="component" value="Unplaced"/>
</dbReference>
<dbReference type="GO" id="GO:0000307">
    <property type="term" value="C:cyclin-dependent protein kinase holoenzyme complex"/>
    <property type="evidence" value="ECO:0000318"/>
    <property type="project" value="GO_Central"/>
</dbReference>
<dbReference type="GO" id="GO:0005737">
    <property type="term" value="C:cytoplasm"/>
    <property type="evidence" value="ECO:0000318"/>
    <property type="project" value="GO_Central"/>
</dbReference>
<dbReference type="GO" id="GO:0015630">
    <property type="term" value="C:microtubule cytoskeleton"/>
    <property type="evidence" value="ECO:0000250"/>
    <property type="project" value="AgBase"/>
</dbReference>
<dbReference type="GO" id="GO:0005815">
    <property type="term" value="C:microtubule organizing center"/>
    <property type="evidence" value="ECO:0000318"/>
    <property type="project" value="GO_Central"/>
</dbReference>
<dbReference type="GO" id="GO:0005634">
    <property type="term" value="C:nucleus"/>
    <property type="evidence" value="ECO:0000318"/>
    <property type="project" value="GO_Central"/>
</dbReference>
<dbReference type="GO" id="GO:0016538">
    <property type="term" value="F:cyclin-dependent protein serine/threonine kinase regulator activity"/>
    <property type="evidence" value="ECO:0000318"/>
    <property type="project" value="GO_Central"/>
</dbReference>
<dbReference type="GO" id="GO:0051301">
    <property type="term" value="P:cell division"/>
    <property type="evidence" value="ECO:0007669"/>
    <property type="project" value="UniProtKB-KW"/>
</dbReference>
<dbReference type="GO" id="GO:0000082">
    <property type="term" value="P:G1/S transition of mitotic cell cycle"/>
    <property type="evidence" value="ECO:0000318"/>
    <property type="project" value="GO_Central"/>
</dbReference>
<dbReference type="CDD" id="cd20570">
    <property type="entry name" value="CYCLIN_CCNB2_rpt2"/>
    <property type="match status" value="1"/>
</dbReference>
<dbReference type="FunFam" id="1.10.472.10:FF:000027">
    <property type="entry name" value="G2/mitotic-specific cyclin-B1"/>
    <property type="match status" value="1"/>
</dbReference>
<dbReference type="Gene3D" id="1.10.472.10">
    <property type="entry name" value="Cyclin-like"/>
    <property type="match status" value="2"/>
</dbReference>
<dbReference type="InterPro" id="IPR039361">
    <property type="entry name" value="Cyclin"/>
</dbReference>
<dbReference type="InterPro" id="IPR013763">
    <property type="entry name" value="Cyclin-like_dom"/>
</dbReference>
<dbReference type="InterPro" id="IPR036915">
    <property type="entry name" value="Cyclin-like_sf"/>
</dbReference>
<dbReference type="InterPro" id="IPR046965">
    <property type="entry name" value="Cyclin_A/B-like"/>
</dbReference>
<dbReference type="InterPro" id="IPR004367">
    <property type="entry name" value="Cyclin_C-dom"/>
</dbReference>
<dbReference type="InterPro" id="IPR006671">
    <property type="entry name" value="Cyclin_N"/>
</dbReference>
<dbReference type="InterPro" id="IPR048258">
    <property type="entry name" value="Cyclins_cyclin-box"/>
</dbReference>
<dbReference type="PANTHER" id="PTHR10177">
    <property type="entry name" value="CYCLINS"/>
    <property type="match status" value="1"/>
</dbReference>
<dbReference type="Pfam" id="PF02984">
    <property type="entry name" value="Cyclin_C"/>
    <property type="match status" value="1"/>
</dbReference>
<dbReference type="Pfam" id="PF00134">
    <property type="entry name" value="Cyclin_N"/>
    <property type="match status" value="1"/>
</dbReference>
<dbReference type="PIRSF" id="PIRSF001771">
    <property type="entry name" value="Cyclin_A_B_D_E"/>
    <property type="match status" value="1"/>
</dbReference>
<dbReference type="SMART" id="SM00385">
    <property type="entry name" value="CYCLIN"/>
    <property type="match status" value="2"/>
</dbReference>
<dbReference type="SMART" id="SM01332">
    <property type="entry name" value="Cyclin_C"/>
    <property type="match status" value="1"/>
</dbReference>
<dbReference type="SUPFAM" id="SSF47954">
    <property type="entry name" value="Cyclin-like"/>
    <property type="match status" value="2"/>
</dbReference>
<dbReference type="PROSITE" id="PS00292">
    <property type="entry name" value="CYCLINS"/>
    <property type="match status" value="1"/>
</dbReference>
<proteinExistence type="evidence at transcript level"/>
<keyword id="KW-0131">Cell cycle</keyword>
<keyword id="KW-0132">Cell division</keyword>
<keyword id="KW-0195">Cyclin</keyword>
<keyword id="KW-0498">Mitosis</keyword>
<keyword id="KW-0597">Phosphoprotein</keyword>
<keyword id="KW-1185">Reference proteome</keyword>
<evidence type="ECO:0000250" key="1"/>
<evidence type="ECO:0000250" key="2">
    <source>
        <dbReference type="UniProtKB" id="O95067"/>
    </source>
</evidence>
<evidence type="ECO:0000256" key="3">
    <source>
        <dbReference type="SAM" id="MobiDB-lite"/>
    </source>
</evidence>
<evidence type="ECO:0000305" key="4"/>
<sequence length="398" mass="45260">MALLRRPTVSTDLENNDTGVNSKPKSHVTIRRAVLEEIGNRVTTRAIQVAKKAQNTKVPVPPTKTTNVNKHPKPTASVKPVQMDVLAPKGPSPTPQDISMKEENLCQAFSDALLCKIEDIDTEDWENPQLCSDYVKDIYQYLRQLEVLQSINPHFLDGRDINGRMRAILVDWLVQVHSKFRLLQETLYMCVAVMDRYLQVQPVSRKKLQLVGITALLLASKYEEMFSPNIEDFVYITDNAYTSSQIREMETLILKELKFELGRPLPLHFLRRASKAGEVDVEQHTLAKYLMELTLVDYDMVHYHPSKVAAAASCLSQKVLGQGKWNLKQQYYTGYTESEVLEVMRHMAKNVVRVNENMTKFTAIKNKYASSKLLKISTIPQLNSKAIQELASPLLGRS</sequence>
<gene>
    <name type="primary">CCNB2</name>
    <name type="synonym">CYCB2</name>
</gene>
<feature type="chain" id="PRO_0000080360" description="G2/mitotic-specific cyclin-B2">
    <location>
        <begin position="1"/>
        <end position="398"/>
    </location>
</feature>
<feature type="region of interest" description="Disordered" evidence="3">
    <location>
        <begin position="1"/>
        <end position="26"/>
    </location>
</feature>
<feature type="region of interest" description="Disordered" evidence="3">
    <location>
        <begin position="53"/>
        <end position="76"/>
    </location>
</feature>
<feature type="compositionally biased region" description="Polar residues" evidence="3">
    <location>
        <begin position="8"/>
        <end position="23"/>
    </location>
</feature>
<feature type="compositionally biased region" description="Low complexity" evidence="3">
    <location>
        <begin position="55"/>
        <end position="69"/>
    </location>
</feature>
<feature type="modified residue" description="Phosphothreonine" evidence="2">
    <location>
        <position position="8"/>
    </location>
</feature>
<feature type="modified residue" description="Phosphoserine" evidence="2">
    <location>
        <position position="77"/>
    </location>
</feature>
<feature type="modified residue" description="Phosphoserine" evidence="2">
    <location>
        <position position="92"/>
    </location>
</feature>
<feature type="modified residue" description="Phosphothreonine" evidence="2">
    <location>
        <position position="94"/>
    </location>
</feature>
<feature type="modified residue" description="Phosphoserine" evidence="2">
    <location>
        <position position="99"/>
    </location>
</feature>
<feature type="modified residue" description="Phosphoserine" evidence="2">
    <location>
        <position position="392"/>
    </location>
</feature>
<feature type="modified residue" description="Phosphoserine" evidence="2">
    <location>
        <position position="398"/>
    </location>
</feature>
<feature type="sequence conflict" description="In Ref. 2; AAX08665/AAX08686/AAX08779/AAX08839 and 3; AAI18383." evidence="4" ref="2 3">
    <original>N</original>
    <variation>S</variation>
    <location>
        <position position="69"/>
    </location>
</feature>
<feature type="sequence conflict" description="In Ref. 1; AAC31953." evidence="4" ref="1">
    <original>R</original>
    <variation>K</variation>
    <location>
        <position position="181"/>
    </location>
</feature>
<feature type="sequence conflict" description="In Ref. 1; AAC31953." evidence="4" ref="1">
    <original>L</original>
    <variation>A</variation>
    <location>
        <position position="210"/>
    </location>
</feature>
<feature type="sequence conflict" description="In Ref. 1; AAC31953." evidence="4" ref="1">
    <original>L</original>
    <variation>V</variation>
    <location>
        <position position="217"/>
    </location>
</feature>
<feature type="sequence conflict" description="In Ref. 2; AAX08779/AAX08839 and 3; AAI18383." evidence="4" ref="2 3">
    <original>N</original>
    <variation>S</variation>
    <location>
        <position position="355"/>
    </location>
</feature>
<comment type="function">
    <text evidence="1">Essential for the control of the cell cycle at the G2/M (mitosis) transition.</text>
</comment>
<comment type="subunit">
    <text evidence="1">Interacts with the CDK1 protein kinase to form a serine/threonine kinase holoenzyme complex also known as maturation promoting factor (MPF). The cyclin subunit imparts substrate specificity to the complex (By similarity).</text>
</comment>
<comment type="developmental stage">
    <text>Accumulates steadily during G2 and is abruptly destroyed at mitosis.</text>
</comment>
<comment type="similarity">
    <text evidence="4">Belongs to the cyclin family. Cyclin AB subfamily.</text>
</comment>
<reference key="1">
    <citation type="submission" date="1998-07" db="EMBL/GenBank/DDBJ databases">
        <title>Bovine cyclin B2 complete cds.</title>
        <authorList>
            <person name="Lastro M.T."/>
            <person name="Ignotz G.G."/>
            <person name="Currie W.B."/>
        </authorList>
    </citation>
    <scope>NUCLEOTIDE SEQUENCE [MRNA]</scope>
</reference>
<reference key="2">
    <citation type="journal article" date="2005" name="BMC Genomics">
        <title>Characterization of 954 bovine full-CDS cDNA sequences.</title>
        <authorList>
            <person name="Harhay G.P."/>
            <person name="Sonstegard T.S."/>
            <person name="Keele J.W."/>
            <person name="Heaton M.P."/>
            <person name="Clawson M.L."/>
            <person name="Snelling W.M."/>
            <person name="Wiedmann R.T."/>
            <person name="Van Tassell C.P."/>
            <person name="Smith T.P.L."/>
        </authorList>
    </citation>
    <scope>NUCLEOTIDE SEQUENCE [LARGE SCALE MRNA]</scope>
</reference>
<reference key="3">
    <citation type="submission" date="2006-06" db="EMBL/GenBank/DDBJ databases">
        <authorList>
            <consortium name="NIH - Mammalian Gene Collection (MGC) project"/>
        </authorList>
    </citation>
    <scope>NUCLEOTIDE SEQUENCE [LARGE SCALE MRNA]</scope>
    <source>
        <strain>Hereford</strain>
        <tissue>Fetal cerebellum</tissue>
    </source>
</reference>
<protein>
    <recommendedName>
        <fullName>G2/mitotic-specific cyclin-B2</fullName>
    </recommendedName>
</protein>
<organism>
    <name type="scientific">Bos taurus</name>
    <name type="common">Bovine</name>
    <dbReference type="NCBI Taxonomy" id="9913"/>
    <lineage>
        <taxon>Eukaryota</taxon>
        <taxon>Metazoa</taxon>
        <taxon>Chordata</taxon>
        <taxon>Craniata</taxon>
        <taxon>Vertebrata</taxon>
        <taxon>Euteleostomi</taxon>
        <taxon>Mammalia</taxon>
        <taxon>Eutheria</taxon>
        <taxon>Laurasiatheria</taxon>
        <taxon>Artiodactyla</taxon>
        <taxon>Ruminantia</taxon>
        <taxon>Pecora</taxon>
        <taxon>Bovidae</taxon>
        <taxon>Bovinae</taxon>
        <taxon>Bos</taxon>
    </lineage>
</organism>